<evidence type="ECO:0000250" key="1"/>
<evidence type="ECO:0000250" key="2">
    <source>
        <dbReference type="UniProtKB" id="P52945"/>
    </source>
</evidence>
<evidence type="ECO:0000250" key="3">
    <source>
        <dbReference type="UniProtKB" id="P52946"/>
    </source>
</evidence>
<evidence type="ECO:0000255" key="4">
    <source>
        <dbReference type="PROSITE-ProRule" id="PRU00108"/>
    </source>
</evidence>
<evidence type="ECO:0000256" key="5">
    <source>
        <dbReference type="SAM" id="MobiDB-lite"/>
    </source>
</evidence>
<evidence type="ECO:0000305" key="6"/>
<sequence>MNGEEQYYAATQLYKDPCAFQRGPAPEFSASPPACLYMGRQPPPPPPPHPFPGALGALEQGSPPDISPYEVPPLADDPAVAHLHHHLPAQLALPHPPAGPFPEGAEPGVLEEPNRVQLPFPWMKSTKAHAWKGQWAGGAYAAEPEENKRTRTAYTRAQLLELEKEFLFNKYISRPRRVELAVMLNLTERHIKIWFQNRRMKWKKEEDKKRGGGTAVGGGGVAEPEQDCAVTSGEELLALPPPPPPGGAVPPAAPVAAREGRLPPGLSASPQPSSVAPRRPQEPR</sequence>
<proteinExistence type="inferred from homology"/>
<protein>
    <recommendedName>
        <fullName>Pancreas/duodenum homeobox protein 1</fullName>
    </recommendedName>
    <alternativeName>
        <fullName>Homeodomain protein PDX1</fullName>
    </alternativeName>
    <alternativeName>
        <fullName>Insulin promoter factor 1</fullName>
        <shortName>IPF-1</shortName>
    </alternativeName>
</protein>
<feature type="chain" id="PRO_0000285452" description="Pancreas/duodenum homeobox protein 1">
    <location>
        <begin position="1"/>
        <end position="284"/>
    </location>
</feature>
<feature type="DNA-binding region" description="Homeobox" evidence="4">
    <location>
        <begin position="147"/>
        <end position="206"/>
    </location>
</feature>
<feature type="region of interest" description="Transactivation domain" evidence="1">
    <location>
        <begin position="13"/>
        <end position="74"/>
    </location>
</feature>
<feature type="region of interest" description="Disordered" evidence="5">
    <location>
        <begin position="34"/>
        <end position="75"/>
    </location>
</feature>
<feature type="region of interest" description="Disordered" evidence="5">
    <location>
        <begin position="202"/>
        <end position="284"/>
    </location>
</feature>
<feature type="short sequence motif" description="Antp-type hexapeptide">
    <location>
        <begin position="119"/>
        <end position="124"/>
    </location>
</feature>
<feature type="short sequence motif" description="Nuclear localization signal" evidence="1">
    <location>
        <begin position="198"/>
        <end position="204"/>
    </location>
</feature>
<feature type="compositionally biased region" description="Pro residues" evidence="5">
    <location>
        <begin position="41"/>
        <end position="51"/>
    </location>
</feature>
<feature type="compositionally biased region" description="Gly residues" evidence="5">
    <location>
        <begin position="212"/>
        <end position="221"/>
    </location>
</feature>
<feature type="compositionally biased region" description="Pro residues" evidence="5">
    <location>
        <begin position="239"/>
        <end position="253"/>
    </location>
</feature>
<feature type="modified residue" description="Phosphothreonine; by PASK" evidence="3">
    <location>
        <position position="152"/>
    </location>
</feature>
<feature type="modified residue" description="Phosphoserine; by HIPK2" evidence="2">
    <location>
        <position position="269"/>
    </location>
</feature>
<name>PDX1_GORGO</name>
<accession>A1YF08</accession>
<organism>
    <name type="scientific">Gorilla gorilla gorilla</name>
    <name type="common">Western lowland gorilla</name>
    <dbReference type="NCBI Taxonomy" id="9595"/>
    <lineage>
        <taxon>Eukaryota</taxon>
        <taxon>Metazoa</taxon>
        <taxon>Chordata</taxon>
        <taxon>Craniata</taxon>
        <taxon>Vertebrata</taxon>
        <taxon>Euteleostomi</taxon>
        <taxon>Mammalia</taxon>
        <taxon>Eutheria</taxon>
        <taxon>Euarchontoglires</taxon>
        <taxon>Primates</taxon>
        <taxon>Haplorrhini</taxon>
        <taxon>Catarrhini</taxon>
        <taxon>Hominidae</taxon>
        <taxon>Gorilla</taxon>
    </lineage>
</organism>
<keyword id="KW-0010">Activator</keyword>
<keyword id="KW-0963">Cytoplasm</keyword>
<keyword id="KW-0238">DNA-binding</keyword>
<keyword id="KW-0371">Homeobox</keyword>
<keyword id="KW-0539">Nucleus</keyword>
<keyword id="KW-0597">Phosphoprotein</keyword>
<keyword id="KW-1185">Reference proteome</keyword>
<keyword id="KW-0804">Transcription</keyword>
<keyword id="KW-0805">Transcription regulation</keyword>
<comment type="function">
    <text evidence="1">Activates insulin and somatostatin gene transcription. Key regulator of islet peptide hormone expression but also responsible for the development of the pancreas, most probably by determining maturation and differentiation of common pancreatic precursor cells in the developing gut. Binds the DNA sequence 5'-CC[CT]TAATGGG-3' (By similarity).</text>
</comment>
<comment type="subunit">
    <text evidence="1">Interacts with the basic helix-loop-helix domains of TCF3(E47) and NEUROD1 and with HMG-I(Y). Interacts with SPOP (By similarity).</text>
</comment>
<comment type="subcellular location">
    <subcellularLocation>
        <location evidence="4">Nucleus</location>
    </subcellularLocation>
    <subcellularLocation>
        <location evidence="1">Cytoplasm</location>
        <location evidence="1">Cytosol</location>
    </subcellularLocation>
</comment>
<comment type="domain">
    <text evidence="1">The Antp-type hexapeptide mediates heterodimerization with PBX on a regulatory element of the somatostatin promoter.</text>
</comment>
<comment type="domain">
    <text evidence="1">The homeodomain, which contains the nuclear localization signal, not only mediates DNA-binding, but also acts as a protein-protein interaction domain for TCF3(E47), NEUROD1 and HMG-I(Y).</text>
</comment>
<comment type="PTM">
    <text evidence="1">Phosphorylated by the SAPK2 pathway at high intracellular glucose concentration. Phosphorylated by HIPK2 on Ser-269 upon glucose accumulation. This phosphorylation mediates subnuclear localization shifting. Phosphorylation by PASK may lead to translocation into the cytosol (By similarity).</text>
</comment>
<comment type="similarity">
    <text evidence="6">Belongs to the Antp homeobox family. IPF1/XlHbox-8 subfamily.</text>
</comment>
<reference key="1">
    <citation type="submission" date="2006-08" db="EMBL/GenBank/DDBJ databases">
        <title>Positive selection in transcription factor genes on the human lineage.</title>
        <authorList>
            <person name="Nickel G.C."/>
            <person name="Tefft D.L."/>
            <person name="Trevarthen K."/>
            <person name="Funt J."/>
            <person name="Adams M.D."/>
        </authorList>
    </citation>
    <scope>NUCLEOTIDE SEQUENCE [GENOMIC DNA]</scope>
</reference>
<dbReference type="EMBL" id="DQ976500">
    <property type="protein sequence ID" value="ABM46726.1"/>
    <property type="molecule type" value="Genomic_DNA"/>
</dbReference>
<dbReference type="RefSeq" id="XP_018895105.1">
    <property type="nucleotide sequence ID" value="XM_019039560.1"/>
</dbReference>
<dbReference type="BMRB" id="A1YF08"/>
<dbReference type="SMR" id="A1YF08"/>
<dbReference type="FunCoup" id="A1YF08">
    <property type="interactions" value="1225"/>
</dbReference>
<dbReference type="STRING" id="9593.ENSGGOP00000002529"/>
<dbReference type="Ensembl" id="ENSGGOT00000002582.3">
    <property type="protein sequence ID" value="ENSGGOP00000002529.3"/>
    <property type="gene ID" value="ENSGGOG00000002569.3"/>
</dbReference>
<dbReference type="GeneID" id="101130338"/>
<dbReference type="KEGG" id="ggo:101130338"/>
<dbReference type="CTD" id="3651"/>
<dbReference type="eggNOG" id="KOG0489">
    <property type="taxonomic scope" value="Eukaryota"/>
</dbReference>
<dbReference type="GeneTree" id="ENSGT00940000162542"/>
<dbReference type="InParanoid" id="A1YF08"/>
<dbReference type="OMA" id="SHSHTWK"/>
<dbReference type="Proteomes" id="UP000001519">
    <property type="component" value="Chromosome 13"/>
</dbReference>
<dbReference type="GO" id="GO:0005829">
    <property type="term" value="C:cytosol"/>
    <property type="evidence" value="ECO:0007669"/>
    <property type="project" value="UniProtKB-SubCell"/>
</dbReference>
<dbReference type="GO" id="GO:0016607">
    <property type="term" value="C:nuclear speck"/>
    <property type="evidence" value="ECO:0007669"/>
    <property type="project" value="Ensembl"/>
</dbReference>
<dbReference type="GO" id="GO:0005634">
    <property type="term" value="C:nucleus"/>
    <property type="evidence" value="ECO:0000318"/>
    <property type="project" value="GO_Central"/>
</dbReference>
<dbReference type="GO" id="GO:0003682">
    <property type="term" value="F:chromatin binding"/>
    <property type="evidence" value="ECO:0007669"/>
    <property type="project" value="Ensembl"/>
</dbReference>
<dbReference type="GO" id="GO:0000981">
    <property type="term" value="F:DNA-binding transcription factor activity, RNA polymerase II-specific"/>
    <property type="evidence" value="ECO:0000318"/>
    <property type="project" value="GO_Central"/>
</dbReference>
<dbReference type="GO" id="GO:0000978">
    <property type="term" value="F:RNA polymerase II cis-regulatory region sequence-specific DNA binding"/>
    <property type="evidence" value="ECO:0000318"/>
    <property type="project" value="GO_Central"/>
</dbReference>
<dbReference type="GO" id="GO:0048565">
    <property type="term" value="P:digestive tract development"/>
    <property type="evidence" value="ECO:0007669"/>
    <property type="project" value="Ensembl"/>
</dbReference>
<dbReference type="GO" id="GO:0031017">
    <property type="term" value="P:exocrine pancreas development"/>
    <property type="evidence" value="ECO:0007669"/>
    <property type="project" value="Ensembl"/>
</dbReference>
<dbReference type="GO" id="GO:0042593">
    <property type="term" value="P:glucose homeostasis"/>
    <property type="evidence" value="ECO:0007669"/>
    <property type="project" value="Ensembl"/>
</dbReference>
<dbReference type="GO" id="GO:0006006">
    <property type="term" value="P:glucose metabolic process"/>
    <property type="evidence" value="ECO:0007669"/>
    <property type="project" value="Ensembl"/>
</dbReference>
<dbReference type="GO" id="GO:0030073">
    <property type="term" value="P:insulin secretion"/>
    <property type="evidence" value="ECO:0007669"/>
    <property type="project" value="Ensembl"/>
</dbReference>
<dbReference type="GO" id="GO:0070059">
    <property type="term" value="P:intrinsic apoptotic signaling pathway in response to endoplasmic reticulum stress"/>
    <property type="evidence" value="ECO:0007669"/>
    <property type="project" value="Ensembl"/>
</dbReference>
<dbReference type="GO" id="GO:0001889">
    <property type="term" value="P:liver development"/>
    <property type="evidence" value="ECO:0007669"/>
    <property type="project" value="Ensembl"/>
</dbReference>
<dbReference type="GO" id="GO:0016331">
    <property type="term" value="P:morphogenesis of embryonic epithelium"/>
    <property type="evidence" value="ECO:0007669"/>
    <property type="project" value="Ensembl"/>
</dbReference>
<dbReference type="GO" id="GO:1902236">
    <property type="term" value="P:negative regulation of endoplasmic reticulum stress-induced intrinsic apoptotic signaling pathway"/>
    <property type="evidence" value="ECO:0007669"/>
    <property type="project" value="Ensembl"/>
</dbReference>
<dbReference type="GO" id="GO:0050680">
    <property type="term" value="P:negative regulation of epithelial cell proliferation"/>
    <property type="evidence" value="ECO:0007669"/>
    <property type="project" value="Ensembl"/>
</dbReference>
<dbReference type="GO" id="GO:0000122">
    <property type="term" value="P:negative regulation of transcription by RNA polymerase II"/>
    <property type="evidence" value="ECO:0007669"/>
    <property type="project" value="Ensembl"/>
</dbReference>
<dbReference type="GO" id="GO:2000675">
    <property type="term" value="P:negative regulation of type B pancreatic cell apoptotic process"/>
    <property type="evidence" value="ECO:0007669"/>
    <property type="project" value="Ensembl"/>
</dbReference>
<dbReference type="GO" id="GO:0032024">
    <property type="term" value="P:positive regulation of insulin secretion"/>
    <property type="evidence" value="ECO:0000250"/>
    <property type="project" value="UniProtKB"/>
</dbReference>
<dbReference type="GO" id="GO:0035774">
    <property type="term" value="P:positive regulation of insulin secretion involved in cellular response to glucose stimulus"/>
    <property type="evidence" value="ECO:0007669"/>
    <property type="project" value="Ensembl"/>
</dbReference>
<dbReference type="GO" id="GO:0045944">
    <property type="term" value="P:positive regulation of transcription by RNA polymerase II"/>
    <property type="evidence" value="ECO:0007669"/>
    <property type="project" value="Ensembl"/>
</dbReference>
<dbReference type="GO" id="GO:1904692">
    <property type="term" value="P:positive regulation of type B pancreatic cell proliferation"/>
    <property type="evidence" value="ECO:0007669"/>
    <property type="project" value="Ensembl"/>
</dbReference>
<dbReference type="GO" id="GO:0006357">
    <property type="term" value="P:regulation of transcription by RNA polymerase II"/>
    <property type="evidence" value="ECO:0000318"/>
    <property type="project" value="GO_Central"/>
</dbReference>
<dbReference type="GO" id="GO:0097050">
    <property type="term" value="P:type B pancreatic cell apoptotic process"/>
    <property type="evidence" value="ECO:0007669"/>
    <property type="project" value="Ensembl"/>
</dbReference>
<dbReference type="GO" id="GO:0003309">
    <property type="term" value="P:type B pancreatic cell differentiation"/>
    <property type="evidence" value="ECO:0000318"/>
    <property type="project" value="GO_Central"/>
</dbReference>
<dbReference type="GO" id="GO:0044342">
    <property type="term" value="P:type B pancreatic cell proliferation"/>
    <property type="evidence" value="ECO:0007669"/>
    <property type="project" value="Ensembl"/>
</dbReference>
<dbReference type="CDD" id="cd00086">
    <property type="entry name" value="homeodomain"/>
    <property type="match status" value="1"/>
</dbReference>
<dbReference type="FunFam" id="1.10.10.60:FF:000176">
    <property type="entry name" value="pancreas/duodenum homeobox protein 1"/>
    <property type="match status" value="1"/>
</dbReference>
<dbReference type="Gene3D" id="1.10.10.60">
    <property type="entry name" value="Homeodomain-like"/>
    <property type="match status" value="1"/>
</dbReference>
<dbReference type="InterPro" id="IPR001356">
    <property type="entry name" value="HD"/>
</dbReference>
<dbReference type="InterPro" id="IPR020479">
    <property type="entry name" value="HD_metazoa"/>
</dbReference>
<dbReference type="InterPro" id="IPR017995">
    <property type="entry name" value="Homeobox_antennapedia"/>
</dbReference>
<dbReference type="InterPro" id="IPR017970">
    <property type="entry name" value="Homeobox_CS"/>
</dbReference>
<dbReference type="InterPro" id="IPR009057">
    <property type="entry name" value="Homeodomain-like_sf"/>
</dbReference>
<dbReference type="PANTHER" id="PTHR45664:SF12">
    <property type="entry name" value="PANCREAS_DUODENUM HOMEOBOX PROTEIN 1"/>
    <property type="match status" value="1"/>
</dbReference>
<dbReference type="PANTHER" id="PTHR45664">
    <property type="entry name" value="PROTEIN ZERKNUELLT 1-RELATED"/>
    <property type="match status" value="1"/>
</dbReference>
<dbReference type="Pfam" id="PF00046">
    <property type="entry name" value="Homeodomain"/>
    <property type="match status" value="1"/>
</dbReference>
<dbReference type="PRINTS" id="PR00025">
    <property type="entry name" value="ANTENNAPEDIA"/>
</dbReference>
<dbReference type="PRINTS" id="PR00024">
    <property type="entry name" value="HOMEOBOX"/>
</dbReference>
<dbReference type="SMART" id="SM00389">
    <property type="entry name" value="HOX"/>
    <property type="match status" value="1"/>
</dbReference>
<dbReference type="SUPFAM" id="SSF46689">
    <property type="entry name" value="Homeodomain-like"/>
    <property type="match status" value="1"/>
</dbReference>
<dbReference type="PROSITE" id="PS00027">
    <property type="entry name" value="HOMEOBOX_1"/>
    <property type="match status" value="1"/>
</dbReference>
<dbReference type="PROSITE" id="PS50071">
    <property type="entry name" value="HOMEOBOX_2"/>
    <property type="match status" value="1"/>
</dbReference>
<gene>
    <name type="primary">PDX1</name>
    <name type="synonym">IPF1</name>
</gene>